<name>NTPPA_PSEA6</name>
<protein>
    <recommendedName>
        <fullName evidence="1">dTTP/UTP pyrophosphatase</fullName>
        <shortName evidence="1">dTTPase/UTPase</shortName>
        <ecNumber evidence="1">3.6.1.9</ecNumber>
    </recommendedName>
    <alternativeName>
        <fullName evidence="1">Nucleoside triphosphate pyrophosphatase</fullName>
    </alternativeName>
    <alternativeName>
        <fullName evidence="1">Nucleotide pyrophosphatase</fullName>
        <shortName evidence="1">Nucleotide PPase</shortName>
    </alternativeName>
</protein>
<organism>
    <name type="scientific">Pseudoalteromonas atlantica (strain T6c / ATCC BAA-1087)</name>
    <dbReference type="NCBI Taxonomy" id="3042615"/>
    <lineage>
        <taxon>Bacteria</taxon>
        <taxon>Pseudomonadati</taxon>
        <taxon>Pseudomonadota</taxon>
        <taxon>Gammaproteobacteria</taxon>
        <taxon>Alteromonadales</taxon>
        <taxon>Alteromonadaceae</taxon>
        <taxon>Paraglaciecola</taxon>
    </lineage>
</organism>
<proteinExistence type="inferred from homology"/>
<evidence type="ECO:0000255" key="1">
    <source>
        <dbReference type="HAMAP-Rule" id="MF_00528"/>
    </source>
</evidence>
<sequence length="192" mass="21079">MLILASQSPRRAELLSQIGVPFTTLSADIDETILPGETPEIYVQRLAKQKAQAGWQASVDIAENRLALGADTVVVIHEQVLGKPENFDDARRMLQRLSGQKHQVFTAVTITSGDQCESILVKTDVTFCDLTTSQIEEYWQTGEPRDKAGSYAIQGIGGKFVTHIKGSYSAVVGLPLYETNQLLSRMSLAHEC</sequence>
<gene>
    <name type="ordered locus">Patl_0186</name>
</gene>
<feature type="chain" id="PRO_0000267374" description="dTTP/UTP pyrophosphatase">
    <location>
        <begin position="1"/>
        <end position="192"/>
    </location>
</feature>
<feature type="active site" description="Proton acceptor" evidence="1">
    <location>
        <position position="71"/>
    </location>
</feature>
<feature type="site" description="Important for substrate specificity" evidence="1">
    <location>
        <position position="10"/>
    </location>
</feature>
<feature type="site" description="Important for substrate specificity" evidence="1">
    <location>
        <position position="72"/>
    </location>
</feature>
<feature type="site" description="Important for substrate specificity" evidence="1">
    <location>
        <position position="154"/>
    </location>
</feature>
<dbReference type="EC" id="3.6.1.9" evidence="1"/>
<dbReference type="EMBL" id="CP000388">
    <property type="protein sequence ID" value="ABG38718.1"/>
    <property type="molecule type" value="Genomic_DNA"/>
</dbReference>
<dbReference type="RefSeq" id="WP_011573123.1">
    <property type="nucleotide sequence ID" value="NC_008228.1"/>
</dbReference>
<dbReference type="SMR" id="Q15ZH0"/>
<dbReference type="STRING" id="342610.Patl_0186"/>
<dbReference type="KEGG" id="pat:Patl_0186"/>
<dbReference type="eggNOG" id="COG0424">
    <property type="taxonomic scope" value="Bacteria"/>
</dbReference>
<dbReference type="HOGENOM" id="CLU_040416_2_1_6"/>
<dbReference type="OrthoDB" id="9807767at2"/>
<dbReference type="Proteomes" id="UP000001981">
    <property type="component" value="Chromosome"/>
</dbReference>
<dbReference type="GO" id="GO:0005737">
    <property type="term" value="C:cytoplasm"/>
    <property type="evidence" value="ECO:0007669"/>
    <property type="project" value="UniProtKB-SubCell"/>
</dbReference>
<dbReference type="GO" id="GO:0036218">
    <property type="term" value="F:dTTP diphosphatase activity"/>
    <property type="evidence" value="ECO:0007669"/>
    <property type="project" value="RHEA"/>
</dbReference>
<dbReference type="GO" id="GO:0036221">
    <property type="term" value="F:UTP diphosphatase activity"/>
    <property type="evidence" value="ECO:0007669"/>
    <property type="project" value="RHEA"/>
</dbReference>
<dbReference type="GO" id="GO:0009117">
    <property type="term" value="P:nucleotide metabolic process"/>
    <property type="evidence" value="ECO:0007669"/>
    <property type="project" value="UniProtKB-KW"/>
</dbReference>
<dbReference type="CDD" id="cd00555">
    <property type="entry name" value="Maf"/>
    <property type="match status" value="1"/>
</dbReference>
<dbReference type="Gene3D" id="3.90.950.10">
    <property type="match status" value="1"/>
</dbReference>
<dbReference type="HAMAP" id="MF_00528">
    <property type="entry name" value="Maf"/>
    <property type="match status" value="1"/>
</dbReference>
<dbReference type="InterPro" id="IPR029001">
    <property type="entry name" value="ITPase-like_fam"/>
</dbReference>
<dbReference type="InterPro" id="IPR003697">
    <property type="entry name" value="Maf-like"/>
</dbReference>
<dbReference type="NCBIfam" id="TIGR00172">
    <property type="entry name" value="maf"/>
    <property type="match status" value="1"/>
</dbReference>
<dbReference type="PANTHER" id="PTHR43213">
    <property type="entry name" value="BIFUNCTIONAL DTTP/UTP PYROPHOSPHATASE/METHYLTRANSFERASE PROTEIN-RELATED"/>
    <property type="match status" value="1"/>
</dbReference>
<dbReference type="PANTHER" id="PTHR43213:SF5">
    <property type="entry name" value="BIFUNCTIONAL DTTP_UTP PYROPHOSPHATASE_METHYLTRANSFERASE PROTEIN-RELATED"/>
    <property type="match status" value="1"/>
</dbReference>
<dbReference type="Pfam" id="PF02545">
    <property type="entry name" value="Maf"/>
    <property type="match status" value="1"/>
</dbReference>
<dbReference type="PIRSF" id="PIRSF006305">
    <property type="entry name" value="Maf"/>
    <property type="match status" value="1"/>
</dbReference>
<dbReference type="SUPFAM" id="SSF52972">
    <property type="entry name" value="ITPase-like"/>
    <property type="match status" value="1"/>
</dbReference>
<reference key="1">
    <citation type="submission" date="2006-06" db="EMBL/GenBank/DDBJ databases">
        <title>Complete sequence of Pseudoalteromonas atlantica T6c.</title>
        <authorList>
            <consortium name="US DOE Joint Genome Institute"/>
            <person name="Copeland A."/>
            <person name="Lucas S."/>
            <person name="Lapidus A."/>
            <person name="Barry K."/>
            <person name="Detter J.C."/>
            <person name="Glavina del Rio T."/>
            <person name="Hammon N."/>
            <person name="Israni S."/>
            <person name="Dalin E."/>
            <person name="Tice H."/>
            <person name="Pitluck S."/>
            <person name="Saunders E."/>
            <person name="Brettin T."/>
            <person name="Bruce D."/>
            <person name="Han C."/>
            <person name="Tapia R."/>
            <person name="Gilna P."/>
            <person name="Schmutz J."/>
            <person name="Larimer F."/>
            <person name="Land M."/>
            <person name="Hauser L."/>
            <person name="Kyrpides N."/>
            <person name="Kim E."/>
            <person name="Karls A.C."/>
            <person name="Bartlett D."/>
            <person name="Higgins B.P."/>
            <person name="Richardson P."/>
        </authorList>
    </citation>
    <scope>NUCLEOTIDE SEQUENCE [LARGE SCALE GENOMIC DNA]</scope>
    <source>
        <strain>T6c / ATCC BAA-1087</strain>
    </source>
</reference>
<keyword id="KW-0963">Cytoplasm</keyword>
<keyword id="KW-0378">Hydrolase</keyword>
<keyword id="KW-0546">Nucleotide metabolism</keyword>
<accession>Q15ZH0</accession>
<comment type="function">
    <text evidence="1">Nucleoside triphosphate pyrophosphatase that hydrolyzes dTTP and UTP. May have a dual role in cell division arrest and in preventing the incorporation of modified nucleotides into cellular nucleic acids.</text>
</comment>
<comment type="catalytic activity">
    <reaction evidence="1">
        <text>dTTP + H2O = dTMP + diphosphate + H(+)</text>
        <dbReference type="Rhea" id="RHEA:28534"/>
        <dbReference type="ChEBI" id="CHEBI:15377"/>
        <dbReference type="ChEBI" id="CHEBI:15378"/>
        <dbReference type="ChEBI" id="CHEBI:33019"/>
        <dbReference type="ChEBI" id="CHEBI:37568"/>
        <dbReference type="ChEBI" id="CHEBI:63528"/>
        <dbReference type="EC" id="3.6.1.9"/>
    </reaction>
</comment>
<comment type="catalytic activity">
    <reaction evidence="1">
        <text>UTP + H2O = UMP + diphosphate + H(+)</text>
        <dbReference type="Rhea" id="RHEA:29395"/>
        <dbReference type="ChEBI" id="CHEBI:15377"/>
        <dbReference type="ChEBI" id="CHEBI:15378"/>
        <dbReference type="ChEBI" id="CHEBI:33019"/>
        <dbReference type="ChEBI" id="CHEBI:46398"/>
        <dbReference type="ChEBI" id="CHEBI:57865"/>
        <dbReference type="EC" id="3.6.1.9"/>
    </reaction>
</comment>
<comment type="cofactor">
    <cofactor evidence="1">
        <name>a divalent metal cation</name>
        <dbReference type="ChEBI" id="CHEBI:60240"/>
    </cofactor>
</comment>
<comment type="subcellular location">
    <subcellularLocation>
        <location evidence="1">Cytoplasm</location>
    </subcellularLocation>
</comment>
<comment type="similarity">
    <text evidence="1">Belongs to the Maf family. YhdE subfamily.</text>
</comment>